<comment type="function">
    <text evidence="1 3 4 5 6">Plays a role in melanin biosynthesis (PubMed:16704458, PubMed:22556244, PubMed:23504663). Catalyzes the oxidation of 5,6-dihydroxyindole-2-carboxylic acid (DHICA) into indole-5,6-quinone-2-carboxylic acid in the presence of bound Cu(2+) ions, but not in the presence of Zn(2+) (PubMed:28661582). May regulate or influence the type of melanin synthesized (PubMed:16704458, PubMed:22556244). Also to a lower extent, capable of hydroxylating tyrosine and producing melanin (By similarity).</text>
</comment>
<comment type="catalytic activity">
    <reaction evidence="6">
        <text>2 5,6-dihydroxyindole-2-carboxylate + O2 = 2 indole-5,6-quinone-2-carboxylate + 2 H2O</text>
        <dbReference type="Rhea" id="RHEA:68388"/>
        <dbReference type="ChEBI" id="CHEBI:15377"/>
        <dbReference type="ChEBI" id="CHEBI:15379"/>
        <dbReference type="ChEBI" id="CHEBI:16875"/>
        <dbReference type="ChEBI" id="CHEBI:177869"/>
    </reaction>
    <physiologicalReaction direction="left-to-right" evidence="14">
        <dbReference type="Rhea" id="RHEA:68389"/>
    </physiologicalReaction>
</comment>
<comment type="cofactor">
    <cofactor evidence="6">
        <name>Cu(2+)</name>
        <dbReference type="ChEBI" id="CHEBI:29036"/>
    </cofactor>
    <cofactor evidence="6">
        <name>Zn(2+)</name>
        <dbReference type="ChEBI" id="CHEBI:29105"/>
    </cofactor>
    <text evidence="6">Contains bound zinc ions after heterologous expression in insect cells, giving rise to a protein that lacks DHICA oxidase activity.</text>
</comment>
<comment type="activity regulation">
    <text evidence="6">The activity depends critically on the nature of the bound metal ion. Catalyzes the oxidation of 5,6-dihydroxyindole-2-carboxylic acid (DHICA) in the presence of bound Cu(2+) ions, but lacks activity in the presence of bound Zn(2+) ions.</text>
</comment>
<comment type="pathway">
    <text evidence="3 4 5">Pigment biosynthesis; melanin biosynthesis.</text>
</comment>
<comment type="subunit">
    <text evidence="1 6">Monomer (PubMed:28661582). Interacts with ATP7A (By similarity) (PubMed:28661582). Interacts with SLC45A2 (By similarity).</text>
</comment>
<comment type="interaction">
    <interactant intactId="EBI-7900408">
        <id>P17643</id>
    </interactant>
    <interactant intactId="EBI-373132">
        <id>O14908</id>
        <label>GIPC1</label>
    </interactant>
    <organismsDiffer>false</organismsDiffer>
    <experiments>3</experiments>
</comment>
<comment type="interaction">
    <interactant intactId="EBI-7900408">
        <id>P17643</id>
    </interactant>
    <interactant intactId="EBI-8652744">
        <id>Q96IW7</id>
        <label>SEC22A</label>
    </interactant>
    <organismsDiffer>false</organismsDiffer>
    <experiments>3</experiments>
</comment>
<comment type="subcellular location">
    <subcellularLocation>
        <location evidence="1">Melanosome membrane</location>
        <topology evidence="1">Single-pass type I membrane protein</topology>
    </subcellularLocation>
    <text evidence="1">Located to mature stage III and IV melanosomes and apposed endosomal tubular membranes. Transported to pigmented melanosomes by the BLOC-1 complex. Proper trafficking to melanosome is regulated by SGSM2, ANKRD27, RAB9A, RAB32 and RAB38.</text>
</comment>
<comment type="tissue specificity">
    <text>Pigment cells.</text>
</comment>
<comment type="PTM">
    <text evidence="1">Glycosylated.</text>
</comment>
<comment type="polymorphism">
    <text evidence="4">Genetic variants in TYRP1 define the skin/hair/eye pigmentation variation locus 11 (SHEP11) [MIM:612271] and are responsible for variability in hair color linked to chromosome 9p23 in Melanesians. Hair, eye and skin pigmentation are among the most visible examples of human phenotypic variation, with a broad normal range that is subject to substantial geographic stratification.</text>
</comment>
<comment type="disease" evidence="3 5">
    <disease id="DI-02090">
        <name>Albinism, oculocutaneous, 3</name>
        <acronym>OCA3</acronym>
        <description>An autosomal recessive disorder in which the biosynthesis of melanin pigment is reduced in skin, hair, and eyes. Tyrosinase activity is normal and patients have only moderate reduction of pigment. The eyes present red reflex on transillumination of the iris, dilution of color of iris, nystagmus and strabismus. Darker-skinned individuals have bright copper-red coloration of the skin and hair.</description>
        <dbReference type="MIM" id="203290"/>
    </disease>
    <text>The disease is caused by variants affecting the gene represented in this entry.</text>
</comment>
<comment type="similarity">
    <text evidence="13">Belongs to the tyrosinase family.</text>
</comment>
<comment type="caution">
    <text evidence="6 7">The precise function of this protein in melanin biosynthesis is still under debate. DHICA oxidase activity is controversial (PubMed:28661582, PubMed:9758418). Lacks DHICA oxidase activity (PubMed:9758418). Has DHICA oxidase activity in the presence of Cu(2+), but lacks DHICA oxidase activity with Zn(2+) (PubMed:28661582).</text>
</comment>
<comment type="online information" name="Albinism database (ADB)">
    <link uri="http://www.ifpcs.org/albinism/oca3mut.html"/>
    <text>TYRP1 mutations</text>
</comment>
<proteinExistence type="evidence at protein level"/>
<gene>
    <name evidence="15" type="primary">TYRP1</name>
    <name evidence="9" type="synonym">CAS2</name>
    <name type="synonym">TYRP</name>
    <name type="synonym">TYRRP</name>
</gene>
<evidence type="ECO:0000250" key="1">
    <source>
        <dbReference type="UniProtKB" id="P07147"/>
    </source>
</evidence>
<evidence type="ECO:0000255" key="2"/>
<evidence type="ECO:0000269" key="3">
    <source>
    </source>
</evidence>
<evidence type="ECO:0000269" key="4">
    <source>
    </source>
</evidence>
<evidence type="ECO:0000269" key="5">
    <source>
    </source>
</evidence>
<evidence type="ECO:0000269" key="6">
    <source>
    </source>
</evidence>
<evidence type="ECO:0000269" key="7">
    <source>
    </source>
</evidence>
<evidence type="ECO:0000303" key="8">
    <source>
    </source>
</evidence>
<evidence type="ECO:0000303" key="9">
    <source>
    </source>
</evidence>
<evidence type="ECO:0000303" key="10">
    <source>
    </source>
</evidence>
<evidence type="ECO:0000303" key="11">
    <source>
    </source>
</evidence>
<evidence type="ECO:0000303" key="12">
    <source>
    </source>
</evidence>
<evidence type="ECO:0000305" key="13"/>
<evidence type="ECO:0000305" key="14">
    <source>
    </source>
</evidence>
<evidence type="ECO:0000312" key="15">
    <source>
        <dbReference type="HGNC" id="HGNC:12450"/>
    </source>
</evidence>
<evidence type="ECO:0007744" key="16">
    <source>
        <dbReference type="PDB" id="5M8L"/>
    </source>
</evidence>
<evidence type="ECO:0007744" key="17">
    <source>
        <dbReference type="PDB" id="5M8M"/>
    </source>
</evidence>
<evidence type="ECO:0007744" key="18">
    <source>
        <dbReference type="PDB" id="5M8N"/>
    </source>
</evidence>
<evidence type="ECO:0007744" key="19">
    <source>
        <dbReference type="PDB" id="5M8O"/>
    </source>
</evidence>
<evidence type="ECO:0007744" key="20">
    <source>
        <dbReference type="PDB" id="5M8P"/>
    </source>
</evidence>
<evidence type="ECO:0007744" key="21">
    <source>
        <dbReference type="PDB" id="5M8Q"/>
    </source>
</evidence>
<evidence type="ECO:0007744" key="22">
    <source>
        <dbReference type="PDB" id="5M8R"/>
    </source>
</evidence>
<evidence type="ECO:0007744" key="23">
    <source>
        <dbReference type="PDB" id="5M8T"/>
    </source>
</evidence>
<evidence type="ECO:0007829" key="24">
    <source>
        <dbReference type="PDB" id="5M8L"/>
    </source>
</evidence>
<evidence type="ECO:0007829" key="25">
    <source>
        <dbReference type="PDB" id="5M8N"/>
    </source>
</evidence>
<evidence type="ECO:0007829" key="26">
    <source>
        <dbReference type="PDB" id="5M8Q"/>
    </source>
</evidence>
<evidence type="ECO:0007829" key="27">
    <source>
        <dbReference type="PDB" id="5M8S"/>
    </source>
</evidence>
<evidence type="ECO:0007829" key="28">
    <source>
        <dbReference type="PDB" id="9EY6"/>
    </source>
</evidence>
<keyword id="KW-0002">3D-structure</keyword>
<keyword id="KW-0015">Albinism</keyword>
<keyword id="KW-0186">Copper</keyword>
<keyword id="KW-0903">Direct protein sequencing</keyword>
<keyword id="KW-0225">Disease variant</keyword>
<keyword id="KW-1015">Disulfide bond</keyword>
<keyword id="KW-0325">Glycoprotein</keyword>
<keyword id="KW-0470">Melanin biosynthesis</keyword>
<keyword id="KW-0472">Membrane</keyword>
<keyword id="KW-0479">Metal-binding</keyword>
<keyword id="KW-0503">Monooxygenase</keyword>
<keyword id="KW-0560">Oxidoreductase</keyword>
<keyword id="KW-1267">Proteomics identification</keyword>
<keyword id="KW-1185">Reference proteome</keyword>
<keyword id="KW-0732">Signal</keyword>
<keyword id="KW-0812">Transmembrane</keyword>
<keyword id="KW-1133">Transmembrane helix</keyword>
<keyword id="KW-0862">Zinc</keyword>
<dbReference type="EC" id="1.14.18.-" evidence="6"/>
<dbReference type="EMBL" id="X51420">
    <property type="protein sequence ID" value="CAA35785.1"/>
    <property type="molecule type" value="mRNA"/>
</dbReference>
<dbReference type="EMBL" id="AF001295">
    <property type="protein sequence ID" value="AAC15468.1"/>
    <property type="molecule type" value="Genomic_DNA"/>
</dbReference>
<dbReference type="EMBL" id="L38952">
    <property type="protein sequence ID" value="AAC41924.1"/>
    <property type="molecule type" value="Genomic_DNA"/>
</dbReference>
<dbReference type="EMBL" id="D83059">
    <property type="protein sequence ID" value="BAA11759.1"/>
    <property type="molecule type" value="Genomic_DNA"/>
</dbReference>
<dbReference type="EMBL" id="BC052608">
    <property type="protein sequence ID" value="AAH52608.1"/>
    <property type="molecule type" value="mRNA"/>
</dbReference>
<dbReference type="EMBL" id="X51455">
    <property type="protein sequence ID" value="CAA35820.1"/>
    <property type="molecule type" value="mRNA"/>
</dbReference>
<dbReference type="EMBL" id="X60955">
    <property type="protein sequence ID" value="CAA43288.1"/>
    <property type="molecule type" value="Genomic_DNA"/>
</dbReference>
<dbReference type="CCDS" id="CCDS34990.1"/>
<dbReference type="PIR" id="S09999">
    <property type="entry name" value="YRHUB6"/>
</dbReference>
<dbReference type="RefSeq" id="NP_000541.1">
    <property type="nucleotide sequence ID" value="NM_000550.3"/>
</dbReference>
<dbReference type="PDB" id="5M8L">
    <property type="method" value="X-ray"/>
    <property type="resolution" value="2.35 A"/>
    <property type="chains" value="A/B/C/D=25-470"/>
</dbReference>
<dbReference type="PDB" id="5M8M">
    <property type="method" value="X-ray"/>
    <property type="resolution" value="2.65 A"/>
    <property type="chains" value="A/B/C/D=25-470"/>
</dbReference>
<dbReference type="PDB" id="5M8N">
    <property type="method" value="X-ray"/>
    <property type="resolution" value="2.60 A"/>
    <property type="chains" value="A/B/C/D=25-470"/>
</dbReference>
<dbReference type="PDB" id="5M8O">
    <property type="method" value="X-ray"/>
    <property type="resolution" value="2.50 A"/>
    <property type="chains" value="A/B/C/D=25-470"/>
</dbReference>
<dbReference type="PDB" id="5M8P">
    <property type="method" value="X-ray"/>
    <property type="resolution" value="2.80 A"/>
    <property type="chains" value="A/B/C/D=25-470"/>
</dbReference>
<dbReference type="PDB" id="5M8Q">
    <property type="method" value="X-ray"/>
    <property type="resolution" value="2.85 A"/>
    <property type="chains" value="A/B/C/D=25-470"/>
</dbReference>
<dbReference type="PDB" id="5M8R">
    <property type="method" value="X-ray"/>
    <property type="resolution" value="2.40 A"/>
    <property type="chains" value="A/B/C/D=25-470"/>
</dbReference>
<dbReference type="PDB" id="5M8S">
    <property type="method" value="X-ray"/>
    <property type="resolution" value="2.20 A"/>
    <property type="chains" value="A/B/C/D=25-470"/>
</dbReference>
<dbReference type="PDB" id="5M8T">
    <property type="method" value="X-ray"/>
    <property type="resolution" value="2.35 A"/>
    <property type="chains" value="A/B/C/D=25-470"/>
</dbReference>
<dbReference type="PDB" id="9EY5">
    <property type="method" value="X-ray"/>
    <property type="resolution" value="2.61 A"/>
    <property type="chains" value="A=25-471"/>
</dbReference>
<dbReference type="PDB" id="9EY6">
    <property type="method" value="X-ray"/>
    <property type="resolution" value="2.23 A"/>
    <property type="chains" value="A=25-471"/>
</dbReference>
<dbReference type="PDB" id="9EY7">
    <property type="method" value="X-ray"/>
    <property type="resolution" value="2.61 A"/>
    <property type="chains" value="A=25-471"/>
</dbReference>
<dbReference type="PDB" id="9EY8">
    <property type="method" value="X-ray"/>
    <property type="resolution" value="2.20 A"/>
    <property type="chains" value="AA/BA/CA/DA=25-471"/>
</dbReference>
<dbReference type="PDBsum" id="5M8L"/>
<dbReference type="PDBsum" id="5M8M"/>
<dbReference type="PDBsum" id="5M8N"/>
<dbReference type="PDBsum" id="5M8O"/>
<dbReference type="PDBsum" id="5M8P"/>
<dbReference type="PDBsum" id="5M8Q"/>
<dbReference type="PDBsum" id="5M8R"/>
<dbReference type="PDBsum" id="5M8S"/>
<dbReference type="PDBsum" id="5M8T"/>
<dbReference type="PDBsum" id="9EY5"/>
<dbReference type="PDBsum" id="9EY6"/>
<dbReference type="PDBsum" id="9EY7"/>
<dbReference type="PDBsum" id="9EY8"/>
<dbReference type="SMR" id="P17643"/>
<dbReference type="BioGRID" id="113156">
    <property type="interactions" value="9"/>
</dbReference>
<dbReference type="FunCoup" id="P17643">
    <property type="interactions" value="145"/>
</dbReference>
<dbReference type="IntAct" id="P17643">
    <property type="interactions" value="3"/>
</dbReference>
<dbReference type="MINT" id="P17643"/>
<dbReference type="STRING" id="9606.ENSP00000373570"/>
<dbReference type="ChEMBL" id="CHEMBL3712886"/>
<dbReference type="TCDB" id="9.B.423.1.2">
    <property type="family name" value="the tysrosinase (tyr) family"/>
</dbReference>
<dbReference type="GlyCosmos" id="P17643">
    <property type="glycosylation" value="6 sites, No reported glycans"/>
</dbReference>
<dbReference type="GlyGen" id="P17643">
    <property type="glycosylation" value="6 sites"/>
</dbReference>
<dbReference type="iPTMnet" id="P17643"/>
<dbReference type="PhosphoSitePlus" id="P17643"/>
<dbReference type="BioMuta" id="TYRP1"/>
<dbReference type="DMDM" id="12644141"/>
<dbReference type="MassIVE" id="P17643"/>
<dbReference type="PaxDb" id="9606-ENSP00000373570"/>
<dbReference type="PeptideAtlas" id="P17643"/>
<dbReference type="ProteomicsDB" id="53498"/>
<dbReference type="ABCD" id="P17643">
    <property type="antibodies" value="3 sequenced antibodies"/>
</dbReference>
<dbReference type="Antibodypedia" id="745">
    <property type="antibodies" value="819 antibodies from 33 providers"/>
</dbReference>
<dbReference type="DNASU" id="7306"/>
<dbReference type="Ensembl" id="ENST00000388918.10">
    <property type="protein sequence ID" value="ENSP00000373570.4"/>
    <property type="gene ID" value="ENSG00000107165.13"/>
</dbReference>
<dbReference type="GeneID" id="7306"/>
<dbReference type="KEGG" id="hsa:7306"/>
<dbReference type="MANE-Select" id="ENST00000388918.10">
    <property type="protein sequence ID" value="ENSP00000373570.4"/>
    <property type="RefSeq nucleotide sequence ID" value="NM_000550.3"/>
    <property type="RefSeq protein sequence ID" value="NP_000541.1"/>
</dbReference>
<dbReference type="UCSC" id="uc003zkv.5">
    <property type="organism name" value="human"/>
</dbReference>
<dbReference type="AGR" id="HGNC:12450"/>
<dbReference type="CTD" id="7306"/>
<dbReference type="DisGeNET" id="7306"/>
<dbReference type="GeneCards" id="TYRP1"/>
<dbReference type="HGNC" id="HGNC:12450">
    <property type="gene designation" value="TYRP1"/>
</dbReference>
<dbReference type="HPA" id="ENSG00000107165">
    <property type="expression patterns" value="Group enriched (choroid plexus, heart muscle, skin)"/>
</dbReference>
<dbReference type="MalaCards" id="TYRP1"/>
<dbReference type="MIM" id="115501">
    <property type="type" value="gene"/>
</dbReference>
<dbReference type="MIM" id="203290">
    <property type="type" value="phenotype"/>
</dbReference>
<dbReference type="MIM" id="612271">
    <property type="type" value="phenotype"/>
</dbReference>
<dbReference type="neXtProt" id="NX_P17643"/>
<dbReference type="OpenTargets" id="ENSG00000107165"/>
<dbReference type="Orphanet" id="79433">
    <property type="disease" value="Oculocutaneous albinism type 3"/>
</dbReference>
<dbReference type="PharmGKB" id="PA37101"/>
<dbReference type="VEuPathDB" id="HostDB:ENSG00000107165"/>
<dbReference type="eggNOG" id="ENOG502QRNA">
    <property type="taxonomic scope" value="Eukaryota"/>
</dbReference>
<dbReference type="GeneTree" id="ENSGT00940000155804"/>
<dbReference type="HOGENOM" id="CLU_038693_1_0_1"/>
<dbReference type="InParanoid" id="P17643"/>
<dbReference type="OMA" id="RNTCDIC"/>
<dbReference type="OrthoDB" id="6132182at2759"/>
<dbReference type="PAN-GO" id="P17643">
    <property type="GO annotations" value="3 GO annotations based on evolutionary models"/>
</dbReference>
<dbReference type="PhylomeDB" id="P17643"/>
<dbReference type="TreeFam" id="TF315865"/>
<dbReference type="PathwayCommons" id="P17643"/>
<dbReference type="Reactome" id="R-HSA-5662702">
    <property type="pathway name" value="Melanin biosynthesis"/>
</dbReference>
<dbReference type="Reactome" id="R-HSA-9824585">
    <property type="pathway name" value="Regulation of MITF-M-dependent genes involved in pigmentation"/>
</dbReference>
<dbReference type="SignaLink" id="P17643"/>
<dbReference type="SIGNOR" id="P17643"/>
<dbReference type="UniPathway" id="UPA00785"/>
<dbReference type="BioGRID-ORCS" id="7306">
    <property type="hits" value="9 hits in 1151 CRISPR screens"/>
</dbReference>
<dbReference type="ChiTaRS" id="TYRP1">
    <property type="organism name" value="human"/>
</dbReference>
<dbReference type="GeneWiki" id="TYRP1"/>
<dbReference type="GenomeRNAi" id="7306"/>
<dbReference type="Pharos" id="P17643">
    <property type="development level" value="Tbio"/>
</dbReference>
<dbReference type="PRO" id="PR:P17643"/>
<dbReference type="Proteomes" id="UP000005640">
    <property type="component" value="Chromosome 9"/>
</dbReference>
<dbReference type="RNAct" id="P17643">
    <property type="molecule type" value="protein"/>
</dbReference>
<dbReference type="Bgee" id="ENSG00000107165">
    <property type="expression patterns" value="Expressed in pigmented layer of retina and 138 other cell types or tissues"/>
</dbReference>
<dbReference type="ExpressionAtlas" id="P17643">
    <property type="expression patterns" value="baseline and differential"/>
</dbReference>
<dbReference type="GO" id="GO:0030669">
    <property type="term" value="C:clathrin-coated endocytic vesicle membrane"/>
    <property type="evidence" value="ECO:0000314"/>
    <property type="project" value="UniProtKB"/>
</dbReference>
<dbReference type="GO" id="GO:0005737">
    <property type="term" value="C:cytoplasm"/>
    <property type="evidence" value="ECO:0000314"/>
    <property type="project" value="UniProtKB"/>
</dbReference>
<dbReference type="GO" id="GO:0010008">
    <property type="term" value="C:endosome membrane"/>
    <property type="evidence" value="ECO:0000314"/>
    <property type="project" value="UniProtKB"/>
</dbReference>
<dbReference type="GO" id="GO:0097708">
    <property type="term" value="C:intracellular vesicle"/>
    <property type="evidence" value="ECO:0000314"/>
    <property type="project" value="UniProtKB"/>
</dbReference>
<dbReference type="GO" id="GO:0042470">
    <property type="term" value="C:melanosome"/>
    <property type="evidence" value="ECO:0000250"/>
    <property type="project" value="UniProtKB"/>
</dbReference>
<dbReference type="GO" id="GO:0033162">
    <property type="term" value="C:melanosome membrane"/>
    <property type="evidence" value="ECO:0000250"/>
    <property type="project" value="UniProtKB"/>
</dbReference>
<dbReference type="GO" id="GO:0046872">
    <property type="term" value="F:metal ion binding"/>
    <property type="evidence" value="ECO:0007669"/>
    <property type="project" value="UniProtKB-KW"/>
</dbReference>
<dbReference type="GO" id="GO:0016491">
    <property type="term" value="F:oxidoreductase activity"/>
    <property type="evidence" value="ECO:0000304"/>
    <property type="project" value="Reactome"/>
</dbReference>
<dbReference type="GO" id="GO:0042803">
    <property type="term" value="F:protein homodimerization activity"/>
    <property type="evidence" value="ECO:0000250"/>
    <property type="project" value="UniProtKB"/>
</dbReference>
<dbReference type="GO" id="GO:0004503">
    <property type="term" value="F:tyrosinase activity"/>
    <property type="evidence" value="ECO:0000314"/>
    <property type="project" value="UniProtKB"/>
</dbReference>
<dbReference type="GO" id="GO:0043438">
    <property type="term" value="P:acetoacetic acid metabolic process"/>
    <property type="evidence" value="ECO:0007669"/>
    <property type="project" value="Ensembl"/>
</dbReference>
<dbReference type="GO" id="GO:0042438">
    <property type="term" value="P:melanin biosynthetic process"/>
    <property type="evidence" value="ECO:0000304"/>
    <property type="project" value="Reactome"/>
</dbReference>
<dbReference type="GO" id="GO:0030318">
    <property type="term" value="P:melanocyte differentiation"/>
    <property type="evidence" value="ECO:0000318"/>
    <property type="project" value="GO_Central"/>
</dbReference>
<dbReference type="GO" id="GO:0032438">
    <property type="term" value="P:melanosome organization"/>
    <property type="evidence" value="ECO:0000318"/>
    <property type="project" value="GO_Central"/>
</dbReference>
<dbReference type="GO" id="GO:0048023">
    <property type="term" value="P:positive regulation of melanin biosynthetic process"/>
    <property type="evidence" value="ECO:0000315"/>
    <property type="project" value="CACAO"/>
</dbReference>
<dbReference type="FunFam" id="1.10.1280.10:FF:000001">
    <property type="entry name" value="5,6-dihydroxyindole-2-carboxylic acid oxidase"/>
    <property type="match status" value="1"/>
</dbReference>
<dbReference type="Gene3D" id="1.10.1280.10">
    <property type="entry name" value="Di-copper center containing domain from catechol oxidase"/>
    <property type="match status" value="1"/>
</dbReference>
<dbReference type="InterPro" id="IPR008922">
    <property type="entry name" value="Di-copper_centre_dom_sf"/>
</dbReference>
<dbReference type="InterPro" id="IPR050316">
    <property type="entry name" value="Tyrosinase/Hemocyanin"/>
</dbReference>
<dbReference type="InterPro" id="IPR002227">
    <property type="entry name" value="Tyrosinase_Cu-bd"/>
</dbReference>
<dbReference type="PANTHER" id="PTHR11474:SF3">
    <property type="entry name" value="5,6-DIHYDROXYINDOLE-2-CARBOXYLIC ACID OXIDASE"/>
    <property type="match status" value="1"/>
</dbReference>
<dbReference type="PANTHER" id="PTHR11474">
    <property type="entry name" value="TYROSINASE FAMILY MEMBER"/>
    <property type="match status" value="1"/>
</dbReference>
<dbReference type="Pfam" id="PF00264">
    <property type="entry name" value="Tyrosinase"/>
    <property type="match status" value="1"/>
</dbReference>
<dbReference type="PRINTS" id="PR00092">
    <property type="entry name" value="TYROSINASE"/>
</dbReference>
<dbReference type="SUPFAM" id="SSF48056">
    <property type="entry name" value="Di-copper centre-containing domain"/>
    <property type="match status" value="1"/>
</dbReference>
<dbReference type="PROSITE" id="PS00497">
    <property type="entry name" value="TYROSINASE_1"/>
    <property type="match status" value="1"/>
</dbReference>
<dbReference type="PROSITE" id="PS00498">
    <property type="entry name" value="TYROSINASE_2"/>
    <property type="match status" value="1"/>
</dbReference>
<sequence>MSAPKLLSLGCIFFPLLLFQQARAQFPRQCATVEALRSGMCCPDLSPVSGPGTDRCGSSSGRGRCEAVTADSRPHSPQYPHDGRDDREVWPLRFFNRTCHCNGNFSGHNCGTCRPGWRGAACDQRVLIVRRNLLDLSKEEKNHFVRALDMAKRTTHPLFVIATRRSEEILGPDGNTPQFENISIYNYFVWTHYYSVKKTFLGVGQESFGEVDFSHEGPAFLTWHRYHLLRLEKDMQEMLQEPSFSLPYWNFATGKNVCDICTDDLMGSRSNFDSTLISPNSVFSQWRVVCDSLEDYDTLGTLCNSTEDGPIRRNPAGNVARPMVQRLPEPQDVAQCLEVGLFDTPPFYSNSTNSFRNTVEGYSDPTGKYDPAVRSLHNLAHLFLNGTGGQTHLSPNDPIFVLLHTFTDAVFDEWLRRYNADISTFPLENAPIGHNRQYNMVPFWPPVTNTEMFVTAPDNLGYTYEIQWPSREFSVPEIIAIAVVGALLLVALIFGTASYLIRARRSMDEANQPLLTDQYQCYAEEYEKLQNPNQSVV</sequence>
<name>TYRP1_HUMAN</name>
<reference key="1">
    <citation type="journal article" date="1990" name="Nucleic Acids Res.">
        <title>Nucleotide sequence of the cDNA encoding human tyrosinase-related protein.</title>
        <authorList>
            <person name="Cohen T."/>
            <person name="Muller R.M."/>
            <person name="Tomita Y."/>
            <person name="Shibahara S."/>
        </authorList>
    </citation>
    <scope>NUCLEOTIDE SEQUENCE [MRNA]</scope>
    <source>
        <tissue>Melanoma</tissue>
    </source>
</reference>
<reference key="2">
    <citation type="journal article" date="1991" name="Biochem. Biophys. Res. Commun.">
        <title>Mapping the human CAS2 gene, the homologue of the mouse brown (b) locus, to human chromosome 9p22-pter.</title>
        <authorList>
            <person name="Chintamaneni C.D."/>
            <person name="Ramsay M."/>
            <person name="Colman M.-A."/>
            <person name="Fox M.F."/>
            <person name="Pickard R.T."/>
            <person name="Kwon B.S."/>
        </authorList>
    </citation>
    <scope>NUCLEOTIDE SEQUENCE [MRNA]</scope>
</reference>
<reference key="3">
    <citation type="journal article" date="1998" name="Mamm. Genome">
        <title>Complete sequence and polymorphism study of the human TYRP1 gene encoding tyrosinase-related protein 1.</title>
        <authorList>
            <person name="Box N.F."/>
            <person name="Wyeth J.R."/>
            <person name="Mayne C.J."/>
            <person name="O'Gorman L.E."/>
            <person name="Martin N.G."/>
            <person name="Sturm R.A."/>
        </authorList>
    </citation>
    <scope>NUCLEOTIDE SEQUENCE [GENOMIC DNA]</scope>
</reference>
<reference key="4">
    <citation type="journal article" date="2004" name="Genome Res.">
        <title>The status, quality, and expansion of the NIH full-length cDNA project: the Mammalian Gene Collection (MGC).</title>
        <authorList>
            <consortium name="The MGC Project Team"/>
        </authorList>
    </citation>
    <scope>NUCLEOTIDE SEQUENCE [LARGE SCALE MRNA]</scope>
    <source>
        <tissue>Skin</tissue>
    </source>
</reference>
<reference key="5">
    <citation type="journal article" date="1995" name="Genomics">
        <title>Chromosomal structure of the human TYRP1 and TYRP2 loci and comparison of the tyrosinase-related protein gene family.</title>
        <authorList>
            <person name="Sturm R.A."/>
            <person name="O'Sullivan B.J."/>
            <person name="Box N.F."/>
            <person name="Smith A.G."/>
            <person name="Smit S.E."/>
            <person name="Puttick E.R.J."/>
            <person name="Parsons P.G."/>
            <person name="Dunn I.S."/>
        </authorList>
    </citation>
    <scope>NUCLEOTIDE SEQUENCE [GENOMIC DNA] OF 1-128</scope>
    <source>
        <tissue>Liver</tissue>
    </source>
</reference>
<reference key="6">
    <citation type="journal article" date="1992" name="Biochem. Biophys. Res. Commun.">
        <title>Downstream region of the human tyrosinase-related protein gene enhances its promoter activity.</title>
        <authorList>
            <person name="Shibata K."/>
            <person name="Takeda K."/>
            <person name="Tomita Y."/>
            <person name="Tagami H."/>
            <person name="Shibahara S."/>
        </authorList>
    </citation>
    <scope>NUCLEOTIDE SEQUENCE [GENOMIC DNA] OF 1-17</scope>
</reference>
<reference key="7">
    <citation type="journal article" date="1990" name="J. Exp. Med.">
        <title>The melanoma antigen gp75 is the human homologue of the mouse b (brown) locus gene product.</title>
        <authorList>
            <person name="Vijayasaradhi S."/>
            <person name="Bouchard B."/>
            <person name="Houghton A.N."/>
        </authorList>
    </citation>
    <scope>NUCLEOTIDE SEQUENCE [MRNA] OF 218-465</scope>
    <scope>PARTIAL PROTEIN SEQUENCE</scope>
    <source>
        <tissue>Melanoma</tissue>
    </source>
</reference>
<reference key="8">
    <citation type="journal article" date="1991" name="Nucleic Acids Res.">
        <title>Human tyrosinase-like protein (TYRL) carboxy terminus: closer homology with the mouse protein than previously reported.</title>
        <authorList>
            <person name="Urquhart A.J."/>
        </authorList>
    </citation>
    <scope>NUCLEOTIDE SEQUENCE [GENOMIC DNA] OF 481-537</scope>
    <source>
        <tissue>Blood</tissue>
        <tissue>Hair root</tissue>
    </source>
</reference>
<reference key="9">
    <citation type="journal article" date="1990" name="Proc. Natl. Acad. Sci. U.S.A.">
        <title>Murine and human b locus pigmentation genes encode a glycoprotein (gp75) with catalase activity.</title>
        <authorList>
            <person name="Halaban R."/>
            <person name="Moellmann G."/>
        </authorList>
    </citation>
    <scope>POSSIBLE FUNCTION</scope>
</reference>
<reference key="10">
    <citation type="journal article" date="1998" name="Exp. Dermatol.">
        <title>Human tyrosinase related protein-1 (TRP-1) does not function as a DHICA oxidase activity in contrast to murine TRP-1.</title>
        <authorList>
            <person name="Boissy R.E."/>
            <person name="Sakai C."/>
            <person name="Zhao H."/>
            <person name="Kobayashi T."/>
            <person name="Hearing V.J."/>
        </authorList>
    </citation>
    <scope>LACK OF DHICA OXIDASE ACTIVITY</scope>
</reference>
<reference key="11">
    <citation type="journal article" date="2003" name="J. Proteome Res.">
        <title>Proteomic analysis of early melanosomes: identification of novel melanosomal proteins.</title>
        <authorList>
            <person name="Basrur V."/>
            <person name="Yang F."/>
            <person name="Kushimoto T."/>
            <person name="Higashimoto Y."/>
            <person name="Yasumoto K."/>
            <person name="Valencia J."/>
            <person name="Muller J."/>
            <person name="Vieira W.D."/>
            <person name="Watabe H."/>
            <person name="Shabanowitz J."/>
            <person name="Hearing V.J."/>
            <person name="Hunt D.F."/>
            <person name="Appella E."/>
        </authorList>
    </citation>
    <scope>SUBCELLULAR LOCATION [LARGE SCALE ANALYSIS]</scope>
    <source>
        <tissue>Melanoma</tissue>
    </source>
</reference>
<reference key="12">
    <citation type="journal article" date="2006" name="J. Proteome Res.">
        <title>Proteomic and bioinformatic characterization of the biogenesis and function of melanosomes.</title>
        <authorList>
            <person name="Chi A."/>
            <person name="Valencia J.C."/>
            <person name="Hu Z.-Z."/>
            <person name="Watabe H."/>
            <person name="Yamaguchi H."/>
            <person name="Mangini N.J."/>
            <person name="Huang H."/>
            <person name="Canfield V.A."/>
            <person name="Cheng K.C."/>
            <person name="Yang F."/>
            <person name="Abe R."/>
            <person name="Yamagishi S."/>
            <person name="Shabanowitz J."/>
            <person name="Hearing V.J."/>
            <person name="Wu C."/>
            <person name="Appella E."/>
            <person name="Hunt D.F."/>
        </authorList>
    </citation>
    <scope>SUBCELLULAR LOCATION [LARGE SCALE ANALYSIS]</scope>
    <source>
        <tissue>Melanoma</tissue>
    </source>
</reference>
<reference evidence="16 17 18 19 20 21 22 23" key="13">
    <citation type="journal article" date="2017" name="Angew. Chem. Int. Ed. Engl.">
        <title>Structure of Human Tyrosinase Related Protein1 Reveals a Binuclear Zinc Active Site Important for Melanogenesis.</title>
        <authorList>
            <person name="Lai X."/>
            <person name="Wichers H.J."/>
            <person name="Soler-Lopez M."/>
            <person name="Dijkstra B.W."/>
        </authorList>
    </citation>
    <scope>X-RAY CRYSTALLOGRAPHY (2.35 ANGSTROMS) OF 25-470 IN COMPLEX WITH ZINC IONS AND SYNTHETIC INHIBITORS</scope>
    <scope>FUNCTION</scope>
    <scope>COFACTOR</scope>
    <scope>CATALYTIC ACTIVITY</scope>
    <scope>ACTIVITY REGULATION</scope>
    <scope>GLYCOSYLATION AT ASN-96; ASN-104; ASN-181; ASN-304; ASN-350 AND ASN-385</scope>
    <scope>DISULFIDE BONDS</scope>
    <scope>MUTAGENESIS OF TYR-362; ARG-374 AND THR-391</scope>
</reference>
<reference key="14">
    <citation type="journal article" date="2012" name="Science">
        <title>Melanesian blond hair is caused by an amino acid change in TYRP1.</title>
        <authorList>
            <person name="Kenny E.E."/>
            <person name="Timpson N.J."/>
            <person name="Sikora M."/>
            <person name="Yee M.C."/>
            <person name="Moreno-Estrada A."/>
            <person name="Eng C."/>
            <person name="Huntsman S."/>
            <person name="Burchard E.G."/>
            <person name="Stoneking M."/>
            <person name="Bustamante C.D."/>
            <person name="Myles S."/>
        </authorList>
    </citation>
    <scope>INVOLVEMENT IN SHEP11</scope>
    <scope>VARIANT CYS-93</scope>
    <scope>ASSOCIATION OF VARIANT CYS-93 WITH BLOND HAIR</scope>
    <scope>FUNCTION</scope>
    <scope>PATHWAY</scope>
</reference>
<reference key="15">
    <citation type="journal article" date="2006" name="Pigment Cell Res.">
        <title>Oculocutaneous albinism with TYRP1 gene mutations in a Caucasian patient.</title>
        <authorList>
            <person name="Rooryck C."/>
            <person name="Roudaut C."/>
            <person name="Robine E."/>
            <person name="Muesebeck J."/>
            <person name="Arveiler B."/>
        </authorList>
    </citation>
    <scope>VARIANT OCA3 GLN-356</scope>
    <scope>PATHWAY</scope>
    <scope>FUNCTION</scope>
</reference>
<reference key="16">
    <citation type="journal article" date="2013" name="Hum. Mutat.">
        <title>DNA variations in oculocutaneous albinism: an updated mutation list and current outstanding issues in molecular diagnostics.</title>
        <authorList>
            <person name="Simeonov D.R."/>
            <person name="Wang X."/>
            <person name="Wang C."/>
            <person name="Sergeev Y."/>
            <person name="Dolinska M."/>
            <person name="Bower M."/>
            <person name="Fischer R."/>
            <person name="Winer D."/>
            <person name="Dubrovsky G."/>
            <person name="Balog J.Z."/>
            <person name="Huizing M."/>
            <person name="Hart R."/>
            <person name="Zein W.M."/>
            <person name="Gahl W.A."/>
            <person name="Brooks B.P."/>
            <person name="Adams D.R."/>
        </authorList>
    </citation>
    <scope>VARIANT OCA3 THR-24</scope>
    <scope>PATHWAY</scope>
    <scope>FUNCTION</scope>
</reference>
<organism>
    <name type="scientific">Homo sapiens</name>
    <name type="common">Human</name>
    <dbReference type="NCBI Taxonomy" id="9606"/>
    <lineage>
        <taxon>Eukaryota</taxon>
        <taxon>Metazoa</taxon>
        <taxon>Chordata</taxon>
        <taxon>Craniata</taxon>
        <taxon>Vertebrata</taxon>
        <taxon>Euteleostomi</taxon>
        <taxon>Mammalia</taxon>
        <taxon>Eutheria</taxon>
        <taxon>Euarchontoglires</taxon>
        <taxon>Primates</taxon>
        <taxon>Haplorrhini</taxon>
        <taxon>Catarrhini</taxon>
        <taxon>Hominidae</taxon>
        <taxon>Homo</taxon>
    </lineage>
</organism>
<feature type="signal peptide">
    <location>
        <begin position="1"/>
        <end position="24"/>
    </location>
</feature>
<feature type="chain" id="PRO_0000035889" description="5,6-dihydroxyindole-2-carboxylic acid oxidase">
    <location>
        <begin position="25"/>
        <end position="537"/>
    </location>
</feature>
<feature type="topological domain" description="Lumenal, melanosome" evidence="2">
    <location>
        <begin position="25"/>
        <end position="477"/>
    </location>
</feature>
<feature type="transmembrane region" description="Helical" evidence="2">
    <location>
        <begin position="478"/>
        <end position="501"/>
    </location>
</feature>
<feature type="topological domain" description="Cytoplasmic" evidence="2">
    <location>
        <begin position="502"/>
        <end position="537"/>
    </location>
</feature>
<feature type="binding site" evidence="6 16">
    <location>
        <position position="192"/>
    </location>
    <ligand>
        <name>Zn(2+)</name>
        <dbReference type="ChEBI" id="CHEBI:29105"/>
        <label>A</label>
    </ligand>
</feature>
<feature type="binding site" evidence="6 16">
    <location>
        <position position="215"/>
    </location>
    <ligand>
        <name>Zn(2+)</name>
        <dbReference type="ChEBI" id="CHEBI:29105"/>
        <label>A</label>
    </ligand>
</feature>
<feature type="binding site" evidence="6 16">
    <location>
        <position position="224"/>
    </location>
    <ligand>
        <name>Zn(2+)</name>
        <dbReference type="ChEBI" id="CHEBI:29105"/>
        <label>A</label>
    </ligand>
</feature>
<feature type="binding site" evidence="6 16">
    <location>
        <position position="377"/>
    </location>
    <ligand>
        <name>Zn(2+)</name>
        <dbReference type="ChEBI" id="CHEBI:29105"/>
        <label>B</label>
    </ligand>
</feature>
<feature type="binding site" evidence="6 16">
    <location>
        <position position="381"/>
    </location>
    <ligand>
        <name>Zn(2+)</name>
        <dbReference type="ChEBI" id="CHEBI:29105"/>
        <label>B</label>
    </ligand>
</feature>
<feature type="binding site" evidence="6 16">
    <location>
        <position position="404"/>
    </location>
    <ligand>
        <name>Zn(2+)</name>
        <dbReference type="ChEBI" id="CHEBI:29105"/>
        <label>B</label>
    </ligand>
</feature>
<feature type="glycosylation site" description="N-linked (GlcNAc...) asparagine" evidence="6 16">
    <location>
        <position position="96"/>
    </location>
</feature>
<feature type="glycosylation site" description="N-linked (GlcNAc...) asparagine" evidence="6 16">
    <location>
        <position position="104"/>
    </location>
</feature>
<feature type="glycosylation site" description="N-linked (GlcNAc...) asparagine" evidence="6 16">
    <location>
        <position position="181"/>
    </location>
</feature>
<feature type="glycosylation site" description="N-linked (GlcNAc...) asparagine" evidence="6 16">
    <location>
        <position position="304"/>
    </location>
</feature>
<feature type="glycosylation site" description="N-linked (GlcNAc...) asparagine" evidence="6 16">
    <location>
        <position position="350"/>
    </location>
</feature>
<feature type="glycosylation site" description="N-linked (GlcNAc...) asparagine" evidence="6 16">
    <location>
        <position position="385"/>
    </location>
</feature>
<feature type="disulfide bond" evidence="6 16 17 18 19 20 21 22 23">
    <location>
        <begin position="30"/>
        <end position="41"/>
    </location>
</feature>
<feature type="disulfide bond" evidence="6 16 17 18 19 20 21 22 23">
    <location>
        <begin position="42"/>
        <end position="65"/>
    </location>
</feature>
<feature type="disulfide bond" evidence="6 16 17 18 19 20 21 22 23">
    <location>
        <begin position="56"/>
        <end position="99"/>
    </location>
</feature>
<feature type="disulfide bond" evidence="6 16 17 18 19 20 21 22 23">
    <location>
        <begin position="101"/>
        <end position="110"/>
    </location>
</feature>
<feature type="disulfide bond" evidence="6 16 17 18 19 20 21 22 23">
    <location>
        <begin position="113"/>
        <end position="122"/>
    </location>
</feature>
<feature type="disulfide bond" evidence="6 16 17 18 19 20 21 22 23">
    <location>
        <begin position="258"/>
        <end position="261"/>
    </location>
</feature>
<feature type="disulfide bond" evidence="6 16 17 18 19 20 21 22 23">
    <location>
        <begin position="290"/>
        <end position="303"/>
    </location>
</feature>
<feature type="sequence variant" id="VAR_072599" description="In OCA3; dbSNP:rs61758405." evidence="5">
    <original>A</original>
    <variation>T</variation>
    <location>
        <position position="24"/>
    </location>
</feature>
<feature type="sequence variant" id="VAR_068176" description="Associated with blond hair in individuals from the Solomon Islands; rare or absent outside of Oceania; dbSNP:rs387907171." evidence="4">
    <original>R</original>
    <variation>C</variation>
    <location>
        <position position="93"/>
    </location>
</feature>
<feature type="sequence variant" id="VAR_026827" description="In dbSNP:rs16929374.">
    <original>R</original>
    <variation>H</variation>
    <location>
        <position position="326"/>
    </location>
</feature>
<feature type="sequence variant" id="VAR_026828" description="In OCA3; dbSNP:rs281865424." evidence="3">
    <original>R</original>
    <variation>Q</variation>
    <location>
        <position position="356"/>
    </location>
</feature>
<feature type="mutagenesis site" description="No effect; when associated with S-374 and V-391." evidence="6">
    <original>Y</original>
    <variation>F</variation>
    <location>
        <position position="362"/>
    </location>
</feature>
<feature type="mutagenesis site" description="No effect; when associated with F-362 and V-391." evidence="6">
    <original>R</original>
    <variation>S</variation>
    <location>
        <position position="374"/>
    </location>
</feature>
<feature type="mutagenesis site" description="No effect; when associated with F-362 and S-374." evidence="6">
    <original>T</original>
    <variation>V</variation>
    <location>
        <position position="391"/>
    </location>
</feature>
<feature type="sequence conflict" description="In Ref. 7; CAA35820." evidence="13" ref="7">
    <original>PN</original>
    <variation>SQ</variation>
    <location>
        <begin position="395"/>
        <end position="396"/>
    </location>
</feature>
<feature type="sequence conflict" description="In Ref. 1; CAA35785 and 2." evidence="13" ref="1 2">
    <original>YEKLQNPNQSVV</original>
    <variation>RI</variation>
    <location>
        <begin position="526"/>
        <end position="537"/>
    </location>
</feature>
<feature type="turn" evidence="27">
    <location>
        <begin position="28"/>
        <end position="30"/>
    </location>
</feature>
<feature type="helix" evidence="27">
    <location>
        <begin position="33"/>
        <end position="38"/>
    </location>
</feature>
<feature type="strand" evidence="27">
    <location>
        <begin position="44"/>
        <end position="46"/>
    </location>
</feature>
<feature type="strand" evidence="27">
    <location>
        <begin position="48"/>
        <end position="50"/>
    </location>
</feature>
<feature type="strand" evidence="27">
    <location>
        <begin position="53"/>
        <end position="55"/>
    </location>
</feature>
<feature type="turn" evidence="27">
    <location>
        <begin position="56"/>
        <end position="61"/>
    </location>
</feature>
<feature type="strand" evidence="27">
    <location>
        <begin position="62"/>
        <end position="67"/>
    </location>
</feature>
<feature type="turn" evidence="27">
    <location>
        <begin position="86"/>
        <end position="94"/>
    </location>
</feature>
<feature type="strand" evidence="27">
    <location>
        <begin position="96"/>
        <end position="101"/>
    </location>
</feature>
<feature type="strand" evidence="27">
    <location>
        <begin position="105"/>
        <end position="107"/>
    </location>
</feature>
<feature type="turn" evidence="27">
    <location>
        <begin position="119"/>
        <end position="122"/>
    </location>
</feature>
<feature type="strand" evidence="27">
    <location>
        <begin position="128"/>
        <end position="130"/>
    </location>
</feature>
<feature type="helix" evidence="27">
    <location>
        <begin position="133"/>
        <end position="135"/>
    </location>
</feature>
<feature type="helix" evidence="27">
    <location>
        <begin position="138"/>
        <end position="153"/>
    </location>
</feature>
<feature type="strand" evidence="27">
    <location>
        <begin position="157"/>
        <end position="164"/>
    </location>
</feature>
<feature type="helix" evidence="27">
    <location>
        <begin position="166"/>
        <end position="168"/>
    </location>
</feature>
<feature type="strand" evidence="27">
    <location>
        <begin position="174"/>
        <end position="176"/>
    </location>
</feature>
<feature type="strand" evidence="26">
    <location>
        <begin position="179"/>
        <end position="183"/>
    </location>
</feature>
<feature type="helix" evidence="27">
    <location>
        <begin position="184"/>
        <end position="196"/>
    </location>
</feature>
<feature type="strand" evidence="26">
    <location>
        <begin position="203"/>
        <end position="205"/>
    </location>
</feature>
<feature type="strand" evidence="27">
    <location>
        <begin position="213"/>
        <end position="217"/>
    </location>
</feature>
<feature type="helix" evidence="27">
    <location>
        <begin position="220"/>
        <end position="239"/>
    </location>
</feature>
<feature type="turn" evidence="28">
    <location>
        <begin position="263"/>
        <end position="266"/>
    </location>
</feature>
<feature type="strand" evidence="25">
    <location>
        <begin position="271"/>
        <end position="273"/>
    </location>
</feature>
<feature type="helix" evidence="27">
    <location>
        <begin position="282"/>
        <end position="285"/>
    </location>
</feature>
<feature type="helix" evidence="27">
    <location>
        <begin position="293"/>
        <end position="299"/>
    </location>
</feature>
<feature type="helix" evidence="27">
    <location>
        <begin position="322"/>
        <end position="324"/>
    </location>
</feature>
<feature type="helix" evidence="27">
    <location>
        <begin position="330"/>
        <end position="336"/>
    </location>
</feature>
<feature type="helix" evidence="27">
    <location>
        <begin position="355"/>
        <end position="360"/>
    </location>
</feature>
<feature type="helix" evidence="27">
    <location>
        <begin position="376"/>
        <end position="383"/>
    </location>
</feature>
<feature type="helix" evidence="27">
    <location>
        <begin position="387"/>
        <end position="389"/>
    </location>
</feature>
<feature type="turn" evidence="27">
    <location>
        <begin position="391"/>
        <end position="393"/>
    </location>
</feature>
<feature type="helix" evidence="27">
    <location>
        <begin position="394"/>
        <end position="396"/>
    </location>
</feature>
<feature type="helix" evidence="27">
    <location>
        <begin position="399"/>
        <end position="417"/>
    </location>
</feature>
<feature type="turn" evidence="27">
    <location>
        <begin position="418"/>
        <end position="420"/>
    </location>
</feature>
<feature type="helix" evidence="24">
    <location>
        <begin position="422"/>
        <end position="424"/>
    </location>
</feature>
<feature type="strand" evidence="27">
    <location>
        <begin position="427"/>
        <end position="431"/>
    </location>
</feature>
<feature type="helix" evidence="27">
    <location>
        <begin position="449"/>
        <end position="452"/>
    </location>
</feature>
<feature type="helix" evidence="27">
    <location>
        <begin position="456"/>
        <end position="459"/>
    </location>
</feature>
<feature type="strand" evidence="27">
    <location>
        <begin position="461"/>
        <end position="464"/>
    </location>
</feature>
<accession>P17643</accession>
<accession>P78468</accession>
<accession>P78469</accession>
<accession>Q13721</accession>
<accession>Q15679</accession>
<protein>
    <recommendedName>
        <fullName>5,6-dihydroxyindole-2-carboxylic acid oxidase</fullName>
        <shortName>DHICA oxidase</shortName>
        <ecNumber evidence="6">1.14.18.-</ecNumber>
    </recommendedName>
    <alternativeName>
        <fullName>Catalase B</fullName>
    </alternativeName>
    <alternativeName>
        <fullName evidence="8">Glycoprotein 75</fullName>
    </alternativeName>
    <alternativeName>
        <fullName evidence="11">Melanoma antigen gp75</fullName>
    </alternativeName>
    <alternativeName>
        <fullName evidence="12">Tyrosinase-related protein 1</fullName>
        <shortName evidence="10">TRP</shortName>
        <shortName>TRP-1</shortName>
        <shortName>TRP1</shortName>
    </alternativeName>
</protein>